<name>EUTC_PSEP1</name>
<sequence length="272" mass="29632">MDHRTPTPDNPWLALRNLTPARIALGRTGTSLPTGAQLDFQFAHAQARDAVHLAFDHAGLASQLSDRGRESLVLHSAASDRHQYLQRPDLGRRLNEDSITTLRQHAQANPGGVDLAIVVADGLSALAVHRHTLPFLTRFDEQAAADGWTSAPVVLVQQGRVAVADEVGELLGARMTVMLIGERPGLSSPDSLGLYFTYAPKVGLTDAYRNCISNIRLEGLSYGMAAHRLLYLMREACRRQLSGVNLKDEAEVHSLENEDSASQKGNFLLGKE</sequence>
<accession>A5VXY9</accession>
<keyword id="KW-1283">Bacterial microcompartment</keyword>
<keyword id="KW-0846">Cobalamin</keyword>
<keyword id="KW-0170">Cobalt</keyword>
<keyword id="KW-0456">Lyase</keyword>
<comment type="function">
    <text evidence="1">Catalyzes the deamination of various vicinal amino-alcohols to oxo compounds. Allows this organism to utilize ethanolamine as the sole source of nitrogen and carbon in the presence of external vitamin B12.</text>
</comment>
<comment type="catalytic activity">
    <reaction evidence="1">
        <text>ethanolamine = acetaldehyde + NH4(+)</text>
        <dbReference type="Rhea" id="RHEA:15313"/>
        <dbReference type="ChEBI" id="CHEBI:15343"/>
        <dbReference type="ChEBI" id="CHEBI:28938"/>
        <dbReference type="ChEBI" id="CHEBI:57603"/>
        <dbReference type="EC" id="4.3.1.7"/>
    </reaction>
</comment>
<comment type="cofactor">
    <cofactor evidence="1">
        <name>adenosylcob(III)alamin</name>
        <dbReference type="ChEBI" id="CHEBI:18408"/>
    </cofactor>
    <text evidence="1">Binds between the large and small subunits.</text>
</comment>
<comment type="pathway">
    <text evidence="1">Amine and polyamine degradation; ethanolamine degradation.</text>
</comment>
<comment type="subunit">
    <text evidence="1">The basic unit is a heterodimer which dimerizes to form tetramers. The heterotetramers trimerize; 6 large subunits form a core ring with 6 small subunits projecting outwards.</text>
</comment>
<comment type="subcellular location">
    <subcellularLocation>
        <location evidence="1">Bacterial microcompartment</location>
    </subcellularLocation>
</comment>
<comment type="similarity">
    <text evidence="1">Belongs to the EutC family.</text>
</comment>
<protein>
    <recommendedName>
        <fullName evidence="1">Ethanolamine ammonia-lyase small subunit</fullName>
        <shortName evidence="1">EAL small subunit</shortName>
        <ecNumber evidence="1">4.3.1.7</ecNumber>
    </recommendedName>
</protein>
<dbReference type="EC" id="4.3.1.7" evidence="1"/>
<dbReference type="EMBL" id="CP000712">
    <property type="protein sequence ID" value="ABQ76749.1"/>
    <property type="molecule type" value="Genomic_DNA"/>
</dbReference>
<dbReference type="SMR" id="A5VXY9"/>
<dbReference type="KEGG" id="ppf:Pput_0581"/>
<dbReference type="eggNOG" id="COG4302">
    <property type="taxonomic scope" value="Bacteria"/>
</dbReference>
<dbReference type="HOGENOM" id="CLU_068224_1_0_6"/>
<dbReference type="UniPathway" id="UPA00560"/>
<dbReference type="GO" id="GO:0009350">
    <property type="term" value="C:ethanolamine ammonia-lyase complex"/>
    <property type="evidence" value="ECO:0007669"/>
    <property type="project" value="UniProtKB-UniRule"/>
</dbReference>
<dbReference type="GO" id="GO:0031471">
    <property type="term" value="C:ethanolamine degradation polyhedral organelle"/>
    <property type="evidence" value="ECO:0007669"/>
    <property type="project" value="UniProtKB-UniRule"/>
</dbReference>
<dbReference type="GO" id="GO:0031419">
    <property type="term" value="F:cobalamin binding"/>
    <property type="evidence" value="ECO:0007669"/>
    <property type="project" value="UniProtKB-UniRule"/>
</dbReference>
<dbReference type="GO" id="GO:0008851">
    <property type="term" value="F:ethanolamine ammonia-lyase activity"/>
    <property type="evidence" value="ECO:0007669"/>
    <property type="project" value="UniProtKB-UniRule"/>
</dbReference>
<dbReference type="GO" id="GO:0006520">
    <property type="term" value="P:amino acid metabolic process"/>
    <property type="evidence" value="ECO:0007669"/>
    <property type="project" value="InterPro"/>
</dbReference>
<dbReference type="GO" id="GO:0046336">
    <property type="term" value="P:ethanolamine catabolic process"/>
    <property type="evidence" value="ECO:0007669"/>
    <property type="project" value="UniProtKB-UniRule"/>
</dbReference>
<dbReference type="FunFam" id="1.10.30.40:FF:000001">
    <property type="entry name" value="Ethanolamine ammonia-lyase light chain"/>
    <property type="match status" value="1"/>
</dbReference>
<dbReference type="FunFam" id="3.40.50.11240:FF:000001">
    <property type="entry name" value="Ethanolamine ammonia-lyase light chain"/>
    <property type="match status" value="1"/>
</dbReference>
<dbReference type="Gene3D" id="3.40.50.11240">
    <property type="entry name" value="Ethanolamine ammonia-lyase light chain (EutC)"/>
    <property type="match status" value="1"/>
</dbReference>
<dbReference type="Gene3D" id="1.10.30.40">
    <property type="entry name" value="Ethanolamine ammonia-lyase light chain (EutC), N-terminal domain"/>
    <property type="match status" value="1"/>
</dbReference>
<dbReference type="HAMAP" id="MF_00601">
    <property type="entry name" value="EutC"/>
    <property type="match status" value="1"/>
</dbReference>
<dbReference type="InterPro" id="IPR009246">
    <property type="entry name" value="EutC"/>
</dbReference>
<dbReference type="InterPro" id="IPR042251">
    <property type="entry name" value="EutC_C"/>
</dbReference>
<dbReference type="InterPro" id="IPR042255">
    <property type="entry name" value="EutC_N"/>
</dbReference>
<dbReference type="NCBIfam" id="NF003971">
    <property type="entry name" value="PRK05465.1"/>
    <property type="match status" value="1"/>
</dbReference>
<dbReference type="PANTHER" id="PTHR39330">
    <property type="entry name" value="ETHANOLAMINE AMMONIA-LYASE LIGHT CHAIN"/>
    <property type="match status" value="1"/>
</dbReference>
<dbReference type="PANTHER" id="PTHR39330:SF1">
    <property type="entry name" value="ETHANOLAMINE AMMONIA-LYASE SMALL SUBUNIT"/>
    <property type="match status" value="1"/>
</dbReference>
<dbReference type="Pfam" id="PF05985">
    <property type="entry name" value="EutC"/>
    <property type="match status" value="1"/>
</dbReference>
<dbReference type="PIRSF" id="PIRSF018982">
    <property type="entry name" value="EutC"/>
    <property type="match status" value="1"/>
</dbReference>
<proteinExistence type="inferred from homology"/>
<gene>
    <name evidence="1" type="primary">eutC</name>
    <name type="ordered locus">Pput_0581</name>
</gene>
<reference key="1">
    <citation type="submission" date="2007-05" db="EMBL/GenBank/DDBJ databases">
        <title>Complete sequence of Pseudomonas putida F1.</title>
        <authorList>
            <consortium name="US DOE Joint Genome Institute"/>
            <person name="Copeland A."/>
            <person name="Lucas S."/>
            <person name="Lapidus A."/>
            <person name="Barry K."/>
            <person name="Detter J.C."/>
            <person name="Glavina del Rio T."/>
            <person name="Hammon N."/>
            <person name="Israni S."/>
            <person name="Dalin E."/>
            <person name="Tice H."/>
            <person name="Pitluck S."/>
            <person name="Chain P."/>
            <person name="Malfatti S."/>
            <person name="Shin M."/>
            <person name="Vergez L."/>
            <person name="Schmutz J."/>
            <person name="Larimer F."/>
            <person name="Land M."/>
            <person name="Hauser L."/>
            <person name="Kyrpides N."/>
            <person name="Lykidis A."/>
            <person name="Parales R."/>
            <person name="Richardson P."/>
        </authorList>
    </citation>
    <scope>NUCLEOTIDE SEQUENCE [LARGE SCALE GENOMIC DNA]</scope>
    <source>
        <strain>ATCC 700007 / DSM 6899 / JCM 31910 / BCRC 17059 / LMG 24140 / F1</strain>
    </source>
</reference>
<feature type="chain" id="PRO_1000025861" description="Ethanolamine ammonia-lyase small subunit">
    <location>
        <begin position="1"/>
        <end position="272"/>
    </location>
</feature>
<feature type="binding site" evidence="1">
    <location>
        <position position="161"/>
    </location>
    <ligand>
        <name>adenosylcob(III)alamin</name>
        <dbReference type="ChEBI" id="CHEBI:18408"/>
    </ligand>
</feature>
<feature type="binding site" evidence="1">
    <location>
        <position position="182"/>
    </location>
    <ligand>
        <name>adenosylcob(III)alamin</name>
        <dbReference type="ChEBI" id="CHEBI:18408"/>
    </ligand>
</feature>
<feature type="binding site" evidence="1">
    <location>
        <position position="211"/>
    </location>
    <ligand>
        <name>adenosylcob(III)alamin</name>
        <dbReference type="ChEBI" id="CHEBI:18408"/>
    </ligand>
</feature>
<evidence type="ECO:0000255" key="1">
    <source>
        <dbReference type="HAMAP-Rule" id="MF_00601"/>
    </source>
</evidence>
<organism>
    <name type="scientific">Pseudomonas putida (strain ATCC 700007 / DSM 6899 / JCM 31910 / BCRC 17059 / LMG 24140 / F1)</name>
    <dbReference type="NCBI Taxonomy" id="351746"/>
    <lineage>
        <taxon>Bacteria</taxon>
        <taxon>Pseudomonadati</taxon>
        <taxon>Pseudomonadota</taxon>
        <taxon>Gammaproteobacteria</taxon>
        <taxon>Pseudomonadales</taxon>
        <taxon>Pseudomonadaceae</taxon>
        <taxon>Pseudomonas</taxon>
    </lineage>
</organism>